<keyword id="KW-1185">Reference proteome</keyword>
<keyword id="KW-0687">Ribonucleoprotein</keyword>
<keyword id="KW-0689">Ribosomal protein</keyword>
<keyword id="KW-0694">RNA-binding</keyword>
<keyword id="KW-0699">rRNA-binding</keyword>
<name>RL4_PARDP</name>
<reference key="1">
    <citation type="submission" date="2006-12" db="EMBL/GenBank/DDBJ databases">
        <title>Complete sequence of chromosome 1 of Paracoccus denitrificans PD1222.</title>
        <authorList>
            <person name="Copeland A."/>
            <person name="Lucas S."/>
            <person name="Lapidus A."/>
            <person name="Barry K."/>
            <person name="Detter J.C."/>
            <person name="Glavina del Rio T."/>
            <person name="Hammon N."/>
            <person name="Israni S."/>
            <person name="Dalin E."/>
            <person name="Tice H."/>
            <person name="Pitluck S."/>
            <person name="Munk A.C."/>
            <person name="Brettin T."/>
            <person name="Bruce D."/>
            <person name="Han C."/>
            <person name="Tapia R."/>
            <person name="Gilna P."/>
            <person name="Schmutz J."/>
            <person name="Larimer F."/>
            <person name="Land M."/>
            <person name="Hauser L."/>
            <person name="Kyrpides N."/>
            <person name="Lykidis A."/>
            <person name="Spiro S."/>
            <person name="Richardson D.J."/>
            <person name="Moir J.W.B."/>
            <person name="Ferguson S.J."/>
            <person name="van Spanning R.J.M."/>
            <person name="Richardson P."/>
        </authorList>
    </citation>
    <scope>NUCLEOTIDE SEQUENCE [LARGE SCALE GENOMIC DNA]</scope>
    <source>
        <strain>Pd 1222</strain>
    </source>
</reference>
<accession>A1B028</accession>
<sequence>MKLDVITLDAGKAGDIDLSDDIFGLEPRADLLHRVVRWQRAKAQAGTHSVLGKSDVSYSTKKIYRQKGTGGARHGSRKAPIFRHGGVYKGPTPRSHAFDLPKKVRALGLKHALSAKAAAGELVVVDSLNIAEAKTAAVAKAVKENGWKRVLVIDGAEVNENFARAARNLEGVDVLPSMGANVYDILRRDTLVLTRAGVEALEARLK</sequence>
<evidence type="ECO:0000255" key="1">
    <source>
        <dbReference type="HAMAP-Rule" id="MF_01328"/>
    </source>
</evidence>
<evidence type="ECO:0000305" key="2"/>
<gene>
    <name evidence="1" type="primary">rplD</name>
    <name type="ordered locus">Pden_0760</name>
</gene>
<feature type="chain" id="PRO_1000052459" description="Large ribosomal subunit protein uL4">
    <location>
        <begin position="1"/>
        <end position="206"/>
    </location>
</feature>
<comment type="function">
    <text evidence="1">One of the primary rRNA binding proteins, this protein initially binds near the 5'-end of the 23S rRNA. It is important during the early stages of 50S assembly. It makes multiple contacts with different domains of the 23S rRNA in the assembled 50S subunit and ribosome.</text>
</comment>
<comment type="function">
    <text evidence="1">Forms part of the polypeptide exit tunnel.</text>
</comment>
<comment type="subunit">
    <text evidence="1">Part of the 50S ribosomal subunit.</text>
</comment>
<comment type="similarity">
    <text evidence="1">Belongs to the universal ribosomal protein uL4 family.</text>
</comment>
<dbReference type="EMBL" id="CP000489">
    <property type="protein sequence ID" value="ABL68872.1"/>
    <property type="molecule type" value="Genomic_DNA"/>
</dbReference>
<dbReference type="RefSeq" id="WP_011747102.1">
    <property type="nucleotide sequence ID" value="NC_008686.1"/>
</dbReference>
<dbReference type="SMR" id="A1B028"/>
<dbReference type="STRING" id="318586.Pden_0760"/>
<dbReference type="EnsemblBacteria" id="ABL68872">
    <property type="protein sequence ID" value="ABL68872"/>
    <property type="gene ID" value="Pden_0760"/>
</dbReference>
<dbReference type="GeneID" id="93451984"/>
<dbReference type="KEGG" id="pde:Pden_0760"/>
<dbReference type="eggNOG" id="COG0088">
    <property type="taxonomic scope" value="Bacteria"/>
</dbReference>
<dbReference type="HOGENOM" id="CLU_041575_5_1_5"/>
<dbReference type="OrthoDB" id="9803201at2"/>
<dbReference type="Proteomes" id="UP000000361">
    <property type="component" value="Chromosome 1"/>
</dbReference>
<dbReference type="GO" id="GO:1990904">
    <property type="term" value="C:ribonucleoprotein complex"/>
    <property type="evidence" value="ECO:0007669"/>
    <property type="project" value="UniProtKB-KW"/>
</dbReference>
<dbReference type="GO" id="GO:0005840">
    <property type="term" value="C:ribosome"/>
    <property type="evidence" value="ECO:0007669"/>
    <property type="project" value="UniProtKB-KW"/>
</dbReference>
<dbReference type="GO" id="GO:0019843">
    <property type="term" value="F:rRNA binding"/>
    <property type="evidence" value="ECO:0007669"/>
    <property type="project" value="UniProtKB-UniRule"/>
</dbReference>
<dbReference type="GO" id="GO:0003735">
    <property type="term" value="F:structural constituent of ribosome"/>
    <property type="evidence" value="ECO:0007669"/>
    <property type="project" value="InterPro"/>
</dbReference>
<dbReference type="GO" id="GO:0006412">
    <property type="term" value="P:translation"/>
    <property type="evidence" value="ECO:0007669"/>
    <property type="project" value="UniProtKB-UniRule"/>
</dbReference>
<dbReference type="Gene3D" id="3.40.1370.10">
    <property type="match status" value="1"/>
</dbReference>
<dbReference type="HAMAP" id="MF_01328_B">
    <property type="entry name" value="Ribosomal_uL4_B"/>
    <property type="match status" value="1"/>
</dbReference>
<dbReference type="InterPro" id="IPR002136">
    <property type="entry name" value="Ribosomal_uL4"/>
</dbReference>
<dbReference type="InterPro" id="IPR013005">
    <property type="entry name" value="Ribosomal_uL4-like"/>
</dbReference>
<dbReference type="InterPro" id="IPR023574">
    <property type="entry name" value="Ribosomal_uL4_dom_sf"/>
</dbReference>
<dbReference type="NCBIfam" id="TIGR03953">
    <property type="entry name" value="rplD_bact"/>
    <property type="match status" value="1"/>
</dbReference>
<dbReference type="PANTHER" id="PTHR10746">
    <property type="entry name" value="50S RIBOSOMAL PROTEIN L4"/>
    <property type="match status" value="1"/>
</dbReference>
<dbReference type="PANTHER" id="PTHR10746:SF6">
    <property type="entry name" value="LARGE RIBOSOMAL SUBUNIT PROTEIN UL4M"/>
    <property type="match status" value="1"/>
</dbReference>
<dbReference type="Pfam" id="PF00573">
    <property type="entry name" value="Ribosomal_L4"/>
    <property type="match status" value="1"/>
</dbReference>
<dbReference type="SUPFAM" id="SSF52166">
    <property type="entry name" value="Ribosomal protein L4"/>
    <property type="match status" value="1"/>
</dbReference>
<proteinExistence type="inferred from homology"/>
<organism>
    <name type="scientific">Paracoccus denitrificans (strain Pd 1222)</name>
    <dbReference type="NCBI Taxonomy" id="318586"/>
    <lineage>
        <taxon>Bacteria</taxon>
        <taxon>Pseudomonadati</taxon>
        <taxon>Pseudomonadota</taxon>
        <taxon>Alphaproteobacteria</taxon>
        <taxon>Rhodobacterales</taxon>
        <taxon>Paracoccaceae</taxon>
        <taxon>Paracoccus</taxon>
    </lineage>
</organism>
<protein>
    <recommendedName>
        <fullName evidence="1">Large ribosomal subunit protein uL4</fullName>
    </recommendedName>
    <alternativeName>
        <fullName evidence="2">50S ribosomal protein L4</fullName>
    </alternativeName>
</protein>